<dbReference type="EC" id="2.4.2.9" evidence="1"/>
<dbReference type="EMBL" id="CP000262">
    <property type="protein sequence ID" value="ABF37273.1"/>
    <property type="molecule type" value="Genomic_DNA"/>
</dbReference>
<dbReference type="SMR" id="Q1J888"/>
<dbReference type="KEGG" id="spi:MGAS10750_Spy0323"/>
<dbReference type="HOGENOM" id="CLU_067096_2_2_9"/>
<dbReference type="UniPathway" id="UPA00574">
    <property type="reaction ID" value="UER00636"/>
</dbReference>
<dbReference type="Proteomes" id="UP000002434">
    <property type="component" value="Chromosome"/>
</dbReference>
<dbReference type="GO" id="GO:0005525">
    <property type="term" value="F:GTP binding"/>
    <property type="evidence" value="ECO:0007669"/>
    <property type="project" value="UniProtKB-KW"/>
</dbReference>
<dbReference type="GO" id="GO:0000287">
    <property type="term" value="F:magnesium ion binding"/>
    <property type="evidence" value="ECO:0007669"/>
    <property type="project" value="UniProtKB-UniRule"/>
</dbReference>
<dbReference type="GO" id="GO:0004845">
    <property type="term" value="F:uracil phosphoribosyltransferase activity"/>
    <property type="evidence" value="ECO:0007669"/>
    <property type="project" value="UniProtKB-UniRule"/>
</dbReference>
<dbReference type="GO" id="GO:0044206">
    <property type="term" value="P:UMP salvage"/>
    <property type="evidence" value="ECO:0007669"/>
    <property type="project" value="UniProtKB-UniRule"/>
</dbReference>
<dbReference type="GO" id="GO:0006223">
    <property type="term" value="P:uracil salvage"/>
    <property type="evidence" value="ECO:0007669"/>
    <property type="project" value="InterPro"/>
</dbReference>
<dbReference type="CDD" id="cd06223">
    <property type="entry name" value="PRTases_typeI"/>
    <property type="match status" value="1"/>
</dbReference>
<dbReference type="FunFam" id="3.40.50.2020:FF:000003">
    <property type="entry name" value="Uracil phosphoribosyltransferase"/>
    <property type="match status" value="1"/>
</dbReference>
<dbReference type="Gene3D" id="3.40.50.2020">
    <property type="match status" value="1"/>
</dbReference>
<dbReference type="HAMAP" id="MF_01218_B">
    <property type="entry name" value="Upp_B"/>
    <property type="match status" value="1"/>
</dbReference>
<dbReference type="InterPro" id="IPR000836">
    <property type="entry name" value="PRibTrfase_dom"/>
</dbReference>
<dbReference type="InterPro" id="IPR029057">
    <property type="entry name" value="PRTase-like"/>
</dbReference>
<dbReference type="InterPro" id="IPR034332">
    <property type="entry name" value="Upp_B"/>
</dbReference>
<dbReference type="InterPro" id="IPR050054">
    <property type="entry name" value="UPRTase/APRTase"/>
</dbReference>
<dbReference type="InterPro" id="IPR005765">
    <property type="entry name" value="Ura_phspho_trans"/>
</dbReference>
<dbReference type="NCBIfam" id="NF001097">
    <property type="entry name" value="PRK00129.1"/>
    <property type="match status" value="1"/>
</dbReference>
<dbReference type="NCBIfam" id="TIGR01091">
    <property type="entry name" value="upp"/>
    <property type="match status" value="1"/>
</dbReference>
<dbReference type="PANTHER" id="PTHR32315">
    <property type="entry name" value="ADENINE PHOSPHORIBOSYLTRANSFERASE"/>
    <property type="match status" value="1"/>
</dbReference>
<dbReference type="PANTHER" id="PTHR32315:SF4">
    <property type="entry name" value="URACIL PHOSPHORIBOSYLTRANSFERASE, CHLOROPLASTIC"/>
    <property type="match status" value="1"/>
</dbReference>
<dbReference type="Pfam" id="PF14681">
    <property type="entry name" value="UPRTase"/>
    <property type="match status" value="1"/>
</dbReference>
<dbReference type="SUPFAM" id="SSF53271">
    <property type="entry name" value="PRTase-like"/>
    <property type="match status" value="1"/>
</dbReference>
<reference key="1">
    <citation type="journal article" date="2006" name="Proc. Natl. Acad. Sci. U.S.A.">
        <title>Molecular genetic anatomy of inter- and intraserotype variation in the human bacterial pathogen group A Streptococcus.</title>
        <authorList>
            <person name="Beres S.B."/>
            <person name="Richter E.W."/>
            <person name="Nagiec M.J."/>
            <person name="Sumby P."/>
            <person name="Porcella S.F."/>
            <person name="DeLeo F.R."/>
            <person name="Musser J.M."/>
        </authorList>
    </citation>
    <scope>NUCLEOTIDE SEQUENCE [LARGE SCALE GENOMIC DNA]</scope>
    <source>
        <strain>MGAS10750</strain>
    </source>
</reference>
<organism>
    <name type="scientific">Streptococcus pyogenes serotype M4 (strain MGAS10750)</name>
    <dbReference type="NCBI Taxonomy" id="370554"/>
    <lineage>
        <taxon>Bacteria</taxon>
        <taxon>Bacillati</taxon>
        <taxon>Bacillota</taxon>
        <taxon>Bacilli</taxon>
        <taxon>Lactobacillales</taxon>
        <taxon>Streptococcaceae</taxon>
        <taxon>Streptococcus</taxon>
    </lineage>
</organism>
<comment type="function">
    <text evidence="1">Catalyzes the conversion of uracil and 5-phospho-alpha-D-ribose 1-diphosphate (PRPP) to UMP and diphosphate.</text>
</comment>
<comment type="catalytic activity">
    <reaction evidence="1">
        <text>UMP + diphosphate = 5-phospho-alpha-D-ribose 1-diphosphate + uracil</text>
        <dbReference type="Rhea" id="RHEA:13017"/>
        <dbReference type="ChEBI" id="CHEBI:17568"/>
        <dbReference type="ChEBI" id="CHEBI:33019"/>
        <dbReference type="ChEBI" id="CHEBI:57865"/>
        <dbReference type="ChEBI" id="CHEBI:58017"/>
        <dbReference type="EC" id="2.4.2.9"/>
    </reaction>
</comment>
<comment type="cofactor">
    <cofactor evidence="1">
        <name>Mg(2+)</name>
        <dbReference type="ChEBI" id="CHEBI:18420"/>
    </cofactor>
    <text evidence="1">Binds 1 Mg(2+) ion per subunit. The magnesium is bound as Mg-PRPP.</text>
</comment>
<comment type="activity regulation">
    <text evidence="1">Allosterically activated by GTP.</text>
</comment>
<comment type="pathway">
    <text evidence="1">Pyrimidine metabolism; UMP biosynthesis via salvage pathway; UMP from uracil: step 1/1.</text>
</comment>
<comment type="similarity">
    <text evidence="1">Belongs to the UPRTase family.</text>
</comment>
<proteinExistence type="inferred from homology"/>
<evidence type="ECO:0000255" key="1">
    <source>
        <dbReference type="HAMAP-Rule" id="MF_01218"/>
    </source>
</evidence>
<protein>
    <recommendedName>
        <fullName evidence="1">Uracil phosphoribosyltransferase</fullName>
        <ecNumber evidence="1">2.4.2.9</ecNumber>
    </recommendedName>
    <alternativeName>
        <fullName evidence="1">UMP pyrophosphorylase</fullName>
    </alternativeName>
    <alternativeName>
        <fullName evidence="1">UPRTase</fullName>
    </alternativeName>
</protein>
<sequence>MGKCQVISHPLIQHKLSILRRQTTSTKDFRELVNEIAMLMGYEVSRDLPLEDVDIQTPVSKTVQKQLAGKKLAIVPILRAGIGMVDGLLSLVPAAKVGHIGMYRNEETLEPVEYLVKLPEDINQRQIFLVDPMLATGGSAILAVDSLKKRGAANIKFVCLVAAPEGVKKLQEAHPDIDIFTAALDDHLNEHGYIVPGLGDAGDRLFGTK</sequence>
<accession>Q1J888</accession>
<name>UPP_STRPF</name>
<feature type="chain" id="PRO_1000053797" description="Uracil phosphoribosyltransferase">
    <location>
        <begin position="1"/>
        <end position="209"/>
    </location>
</feature>
<feature type="binding site" evidence="1">
    <location>
        <position position="79"/>
    </location>
    <ligand>
        <name>5-phospho-alpha-D-ribose 1-diphosphate</name>
        <dbReference type="ChEBI" id="CHEBI:58017"/>
    </ligand>
</feature>
<feature type="binding site" evidence="1">
    <location>
        <position position="104"/>
    </location>
    <ligand>
        <name>5-phospho-alpha-D-ribose 1-diphosphate</name>
        <dbReference type="ChEBI" id="CHEBI:58017"/>
    </ligand>
</feature>
<feature type="binding site" evidence="1">
    <location>
        <begin position="131"/>
        <end position="139"/>
    </location>
    <ligand>
        <name>5-phospho-alpha-D-ribose 1-diphosphate</name>
        <dbReference type="ChEBI" id="CHEBI:58017"/>
    </ligand>
</feature>
<feature type="binding site" evidence="1">
    <location>
        <position position="194"/>
    </location>
    <ligand>
        <name>uracil</name>
        <dbReference type="ChEBI" id="CHEBI:17568"/>
    </ligand>
</feature>
<feature type="binding site" evidence="1">
    <location>
        <begin position="199"/>
        <end position="201"/>
    </location>
    <ligand>
        <name>uracil</name>
        <dbReference type="ChEBI" id="CHEBI:17568"/>
    </ligand>
</feature>
<feature type="binding site" evidence="1">
    <location>
        <position position="200"/>
    </location>
    <ligand>
        <name>5-phospho-alpha-D-ribose 1-diphosphate</name>
        <dbReference type="ChEBI" id="CHEBI:58017"/>
    </ligand>
</feature>
<keyword id="KW-0021">Allosteric enzyme</keyword>
<keyword id="KW-0328">Glycosyltransferase</keyword>
<keyword id="KW-0342">GTP-binding</keyword>
<keyword id="KW-0460">Magnesium</keyword>
<keyword id="KW-0547">Nucleotide-binding</keyword>
<keyword id="KW-0808">Transferase</keyword>
<gene>
    <name evidence="1" type="primary">upp</name>
    <name type="ordered locus">MGAS10750_Spy0323</name>
</gene>